<sequence>MNTIVMQADKKLQEKIRTDLAQHHISNNNPYVVFSAKISGTTVLLYTSGKLVFQGSNASHIAQKYGYIEQKESCSSETQDIPIIGTDEVGNGSYFGGLAVVASFVTPKDHAYLKKLGVGDSKTLTDQKIKQIAPLLEKAIPHKALLLSPQKYNQVVGPNNKHNAVSVKVALHNQAIFLLLQDGFEPEKIVIDAFTSSKNYQNYLKNEKNQFKQTITLEEKAENKYLAVAVSSIIARNLFLENLNKLSDDVGYKLPSGAGHQSDKVASQLLKAYGISSLEHCAKLHFANTKKAQALLK</sequence>
<dbReference type="EC" id="3.1.26.4" evidence="1"/>
<dbReference type="EMBL" id="AL766853">
    <property type="protein sequence ID" value="CAD47426.1"/>
    <property type="molecule type" value="Genomic_DNA"/>
</dbReference>
<dbReference type="RefSeq" id="WP_001092534.1">
    <property type="nucleotide sequence ID" value="NC_004368.1"/>
</dbReference>
<dbReference type="SMR" id="Q8E3J2"/>
<dbReference type="KEGG" id="san:gbs1767"/>
<dbReference type="eggNOG" id="COG1039">
    <property type="taxonomic scope" value="Bacteria"/>
</dbReference>
<dbReference type="HOGENOM" id="CLU_059546_1_0_9"/>
<dbReference type="Proteomes" id="UP000000823">
    <property type="component" value="Chromosome"/>
</dbReference>
<dbReference type="GO" id="GO:0005737">
    <property type="term" value="C:cytoplasm"/>
    <property type="evidence" value="ECO:0007669"/>
    <property type="project" value="UniProtKB-SubCell"/>
</dbReference>
<dbReference type="GO" id="GO:0032299">
    <property type="term" value="C:ribonuclease H2 complex"/>
    <property type="evidence" value="ECO:0007669"/>
    <property type="project" value="TreeGrafter"/>
</dbReference>
<dbReference type="GO" id="GO:0000287">
    <property type="term" value="F:magnesium ion binding"/>
    <property type="evidence" value="ECO:0007669"/>
    <property type="project" value="UniProtKB-UniRule"/>
</dbReference>
<dbReference type="GO" id="GO:0003723">
    <property type="term" value="F:RNA binding"/>
    <property type="evidence" value="ECO:0007669"/>
    <property type="project" value="InterPro"/>
</dbReference>
<dbReference type="GO" id="GO:0004523">
    <property type="term" value="F:RNA-DNA hybrid ribonuclease activity"/>
    <property type="evidence" value="ECO:0007669"/>
    <property type="project" value="UniProtKB-UniRule"/>
</dbReference>
<dbReference type="GO" id="GO:0043137">
    <property type="term" value="P:DNA replication, removal of RNA primer"/>
    <property type="evidence" value="ECO:0007669"/>
    <property type="project" value="TreeGrafter"/>
</dbReference>
<dbReference type="GO" id="GO:0006298">
    <property type="term" value="P:mismatch repair"/>
    <property type="evidence" value="ECO:0007669"/>
    <property type="project" value="TreeGrafter"/>
</dbReference>
<dbReference type="CDD" id="cd06590">
    <property type="entry name" value="RNase_HII_bacteria_HIII_like"/>
    <property type="match status" value="1"/>
</dbReference>
<dbReference type="CDD" id="cd14796">
    <property type="entry name" value="RNAse_HIII_N"/>
    <property type="match status" value="1"/>
</dbReference>
<dbReference type="FunFam" id="3.30.420.10:FF:000047">
    <property type="entry name" value="Ribonuclease HIII"/>
    <property type="match status" value="1"/>
</dbReference>
<dbReference type="Gene3D" id="3.30.420.10">
    <property type="entry name" value="Ribonuclease H-like superfamily/Ribonuclease H"/>
    <property type="match status" value="1"/>
</dbReference>
<dbReference type="Gene3D" id="3.30.310.10">
    <property type="entry name" value="TATA-Binding Protein"/>
    <property type="match status" value="1"/>
</dbReference>
<dbReference type="HAMAP" id="MF_00053">
    <property type="entry name" value="RNase_HIII"/>
    <property type="match status" value="1"/>
</dbReference>
<dbReference type="InterPro" id="IPR001352">
    <property type="entry name" value="RNase_HII/HIII"/>
</dbReference>
<dbReference type="InterPro" id="IPR024567">
    <property type="entry name" value="RNase_HII/HIII_dom"/>
</dbReference>
<dbReference type="InterPro" id="IPR004641">
    <property type="entry name" value="RNase_HIII"/>
</dbReference>
<dbReference type="InterPro" id="IPR024568">
    <property type="entry name" value="RNase_HIII_N"/>
</dbReference>
<dbReference type="InterPro" id="IPR012337">
    <property type="entry name" value="RNaseH-like_sf"/>
</dbReference>
<dbReference type="InterPro" id="IPR036397">
    <property type="entry name" value="RNaseH_sf"/>
</dbReference>
<dbReference type="InterPro" id="IPR012295">
    <property type="entry name" value="TBP_dom_sf"/>
</dbReference>
<dbReference type="NCBIfam" id="TIGR00716">
    <property type="entry name" value="rnhC"/>
    <property type="match status" value="1"/>
</dbReference>
<dbReference type="PANTHER" id="PTHR10954:SF23">
    <property type="entry name" value="RIBONUCLEASE"/>
    <property type="match status" value="1"/>
</dbReference>
<dbReference type="PANTHER" id="PTHR10954">
    <property type="entry name" value="RIBONUCLEASE H2 SUBUNIT A"/>
    <property type="match status" value="1"/>
</dbReference>
<dbReference type="Pfam" id="PF11858">
    <property type="entry name" value="DUF3378"/>
    <property type="match status" value="1"/>
</dbReference>
<dbReference type="Pfam" id="PF01351">
    <property type="entry name" value="RNase_HII"/>
    <property type="match status" value="1"/>
</dbReference>
<dbReference type="PIRSF" id="PIRSF037748">
    <property type="entry name" value="RnhC"/>
    <property type="match status" value="1"/>
</dbReference>
<dbReference type="SUPFAM" id="SSF53098">
    <property type="entry name" value="Ribonuclease H-like"/>
    <property type="match status" value="1"/>
</dbReference>
<dbReference type="PROSITE" id="PS51975">
    <property type="entry name" value="RNASE_H_2"/>
    <property type="match status" value="1"/>
</dbReference>
<reference key="1">
    <citation type="journal article" date="2002" name="Mol. Microbiol.">
        <title>Genome sequence of Streptococcus agalactiae, a pathogen causing invasive neonatal disease.</title>
        <authorList>
            <person name="Glaser P."/>
            <person name="Rusniok C."/>
            <person name="Buchrieser C."/>
            <person name="Chevalier F."/>
            <person name="Frangeul L."/>
            <person name="Msadek T."/>
            <person name="Zouine M."/>
            <person name="Couve E."/>
            <person name="Lalioui L."/>
            <person name="Poyart C."/>
            <person name="Trieu-Cuot P."/>
            <person name="Kunst F."/>
        </authorList>
    </citation>
    <scope>NUCLEOTIDE SEQUENCE [LARGE SCALE GENOMIC DNA]</scope>
    <source>
        <strain>NEM316</strain>
    </source>
</reference>
<name>RNH3_STRA3</name>
<accession>Q8E3J2</accession>
<gene>
    <name evidence="1" type="primary">rnhC</name>
    <name type="ordered locus">gbs1767</name>
</gene>
<protein>
    <recommendedName>
        <fullName evidence="1">Ribonuclease HIII</fullName>
        <shortName evidence="1">RNase HIII</shortName>
        <ecNumber evidence="1">3.1.26.4</ecNumber>
    </recommendedName>
</protein>
<organism>
    <name type="scientific">Streptococcus agalactiae serotype III (strain NEM316)</name>
    <dbReference type="NCBI Taxonomy" id="211110"/>
    <lineage>
        <taxon>Bacteria</taxon>
        <taxon>Bacillati</taxon>
        <taxon>Bacillota</taxon>
        <taxon>Bacilli</taxon>
        <taxon>Lactobacillales</taxon>
        <taxon>Streptococcaceae</taxon>
        <taxon>Streptococcus</taxon>
    </lineage>
</organism>
<evidence type="ECO:0000255" key="1">
    <source>
        <dbReference type="HAMAP-Rule" id="MF_00053"/>
    </source>
</evidence>
<evidence type="ECO:0000255" key="2">
    <source>
        <dbReference type="PROSITE-ProRule" id="PRU01319"/>
    </source>
</evidence>
<proteinExistence type="inferred from homology"/>
<keyword id="KW-0963">Cytoplasm</keyword>
<keyword id="KW-0255">Endonuclease</keyword>
<keyword id="KW-0378">Hydrolase</keyword>
<keyword id="KW-0460">Magnesium</keyword>
<keyword id="KW-0479">Metal-binding</keyword>
<keyword id="KW-0540">Nuclease</keyword>
<comment type="function">
    <text evidence="1">Endonuclease that specifically degrades the RNA of RNA-DNA hybrids.</text>
</comment>
<comment type="catalytic activity">
    <reaction evidence="1">
        <text>Endonucleolytic cleavage to 5'-phosphomonoester.</text>
        <dbReference type="EC" id="3.1.26.4"/>
    </reaction>
</comment>
<comment type="cofactor">
    <cofactor evidence="1">
        <name>Mn(2+)</name>
        <dbReference type="ChEBI" id="CHEBI:29035"/>
    </cofactor>
    <cofactor evidence="1">
        <name>Mg(2+)</name>
        <dbReference type="ChEBI" id="CHEBI:18420"/>
    </cofactor>
    <text evidence="1">Manganese or magnesium. Binds 1 divalent metal ion per monomer in the absence of substrate. May bind a second metal ion after substrate binding.</text>
</comment>
<comment type="subcellular location">
    <subcellularLocation>
        <location evidence="1">Cytoplasm</location>
    </subcellularLocation>
</comment>
<comment type="similarity">
    <text evidence="1">Belongs to the RNase HII family. RnhC subfamily.</text>
</comment>
<feature type="chain" id="PRO_0000111699" description="Ribonuclease HIII">
    <location>
        <begin position="1"/>
        <end position="297"/>
    </location>
</feature>
<feature type="domain" description="RNase H type-2" evidence="2">
    <location>
        <begin position="81"/>
        <end position="297"/>
    </location>
</feature>
<feature type="binding site" evidence="1">
    <location>
        <position position="87"/>
    </location>
    <ligand>
        <name>a divalent metal cation</name>
        <dbReference type="ChEBI" id="CHEBI:60240"/>
    </ligand>
</feature>
<feature type="binding site" evidence="1">
    <location>
        <position position="88"/>
    </location>
    <ligand>
        <name>a divalent metal cation</name>
        <dbReference type="ChEBI" id="CHEBI:60240"/>
    </ligand>
</feature>
<feature type="binding site" evidence="1">
    <location>
        <position position="192"/>
    </location>
    <ligand>
        <name>a divalent metal cation</name>
        <dbReference type="ChEBI" id="CHEBI:60240"/>
    </ligand>
</feature>